<gene>
    <name type="primary">P/V</name>
</gene>
<organismHost>
    <name type="scientific">Gallus gallus</name>
    <name type="common">Chicken</name>
    <dbReference type="NCBI Taxonomy" id="9031"/>
</organismHost>
<reference key="1">
    <citation type="journal article" date="1993" name="J. Gen. Virol.">
        <title>RNA editing in Newcastle disease virus.</title>
        <authorList>
            <person name="Steward M."/>
            <person name="Vipond I.B."/>
            <person name="Millar N.S."/>
            <person name="Emmerson P.T."/>
        </authorList>
    </citation>
    <scope>NUCLEOTIDE SEQUENCE [GENOMIC RNA / MRNA]</scope>
    <scope>RNA EDITING</scope>
</reference>
<feature type="chain" id="PRO_0000142813" description="Non-structural protein V">
    <location>
        <begin position="1"/>
        <end position="239"/>
    </location>
</feature>
<feature type="region of interest" description="Disordered" evidence="3">
    <location>
        <begin position="30"/>
        <end position="104"/>
    </location>
</feature>
<feature type="region of interest" description="Disordered" evidence="3">
    <location>
        <begin position="126"/>
        <end position="180"/>
    </location>
</feature>
<feature type="compositionally biased region" description="Basic and acidic residues" evidence="3">
    <location>
        <begin position="65"/>
        <end position="74"/>
    </location>
</feature>
<feature type="compositionally biased region" description="Polar residues" evidence="3">
    <location>
        <begin position="89"/>
        <end position="98"/>
    </location>
</feature>
<feature type="compositionally biased region" description="Polar residues" evidence="3">
    <location>
        <begin position="143"/>
        <end position="153"/>
    </location>
</feature>
<feature type="binding site" evidence="1">
    <location>
        <position position="177"/>
    </location>
    <ligand>
        <name>Zn(2+)</name>
        <dbReference type="ChEBI" id="CHEBI:29105"/>
        <label>1</label>
    </ligand>
</feature>
<feature type="binding site" evidence="1">
    <location>
        <position position="196"/>
    </location>
    <ligand>
        <name>Zn(2+)</name>
        <dbReference type="ChEBI" id="CHEBI:29105"/>
        <label>1</label>
    </ligand>
</feature>
<feature type="binding site" evidence="1">
    <location>
        <position position="200"/>
    </location>
    <ligand>
        <name>Zn(2+)</name>
        <dbReference type="ChEBI" id="CHEBI:29105"/>
        <label>2</label>
    </ligand>
</feature>
<feature type="binding site" evidence="1">
    <location>
        <position position="212"/>
    </location>
    <ligand>
        <name>Zn(2+)</name>
        <dbReference type="ChEBI" id="CHEBI:29105"/>
        <label>2</label>
    </ligand>
</feature>
<feature type="binding site" evidence="1">
    <location>
        <position position="214"/>
    </location>
    <ligand>
        <name>Zn(2+)</name>
        <dbReference type="ChEBI" id="CHEBI:29105"/>
        <label>2</label>
    </ligand>
</feature>
<feature type="binding site" evidence="1">
    <location>
        <position position="217"/>
    </location>
    <ligand>
        <name>Zn(2+)</name>
        <dbReference type="ChEBI" id="CHEBI:29105"/>
        <label>2</label>
    </ligand>
</feature>
<feature type="binding site" evidence="1">
    <location>
        <position position="221"/>
    </location>
    <ligand>
        <name>Zn(2+)</name>
        <dbReference type="ChEBI" id="CHEBI:29105"/>
        <label>1</label>
    </ligand>
</feature>
<feature type="binding site" evidence="1">
    <location>
        <position position="224"/>
    </location>
    <ligand>
        <name>Zn(2+)</name>
        <dbReference type="ChEBI" id="CHEBI:29105"/>
        <label>1</label>
    </ligand>
</feature>
<name>V_NDVU2</name>
<keyword id="KW-1035">Host cytoplasm</keyword>
<keyword id="KW-1048">Host nucleus</keyword>
<keyword id="KW-0945">Host-virus interaction</keyword>
<keyword id="KW-1090">Inhibition of host innate immune response by virus</keyword>
<keyword id="KW-1089">Inhibition of host MDA5 by virus</keyword>
<keyword id="KW-1113">Inhibition of host RLR pathway by virus</keyword>
<keyword id="KW-0922">Interferon antiviral system evasion</keyword>
<keyword id="KW-0479">Metal-binding</keyword>
<keyword id="KW-0691">RNA editing</keyword>
<keyword id="KW-0899">Viral immunoevasion</keyword>
<keyword id="KW-0862">Zinc</keyword>
<proteinExistence type="inferred from homology"/>
<organism>
    <name type="scientific">Newcastle disease virus (strain Ulster/2C)</name>
    <name type="common">NDV</name>
    <dbReference type="NCBI Taxonomy" id="36411"/>
    <lineage>
        <taxon>Viruses</taxon>
        <taxon>Riboviria</taxon>
        <taxon>Orthornavirae</taxon>
        <taxon>Negarnaviricota</taxon>
        <taxon>Haploviricotina</taxon>
        <taxon>Monjiviricetes</taxon>
        <taxon>Mononegavirales</taxon>
        <taxon>Paramyxoviridae</taxon>
        <taxon>Avulavirinae</taxon>
        <taxon>Orthoavulavirus</taxon>
        <taxon>Orthoavulavirus javaense</taxon>
        <taxon>Avian paramyxovirus 1</taxon>
    </lineage>
</organism>
<comment type="function">
    <text evidence="2">Protects the virus against cell antiviral state by blocking host interferon signaling. Mechanistically, targets host phosphorylated STAT1 (phospho-STAT1) for degradation, thereby inhibiting the interferon alpha signaling pathway. Plays a role in the inhibition of host apoptosis. Interacts with and down-regulates the expression of host TXNL1. In turn, inhibits TXNL1-induced apoptosis through the BCL2-BAX-caspase 3 pathway. Inhibits host apoptosis also by negatively regulating host CacyBP/SIP. Promotes viral replication by activating the extracellular signal-regulated kinase (ERK) pathway.</text>
</comment>
<comment type="subunit">
    <text evidence="2">Interacts with host STAT1. Interacts with host TXNL1. Interacts (via C-terminus) with host CacyBP; this interaction inhibits host cell apoptosis.</text>
</comment>
<comment type="subcellular location">
    <subcellularLocation>
        <location evidence="2">Host cytoplasm</location>
    </subcellularLocation>
    <subcellularLocation>
        <location evidence="2">Host nucleus</location>
    </subcellularLocation>
</comment>
<comment type="RNA editing">
    <location>
        <position position="135" evidence="4"/>
    </location>
    <text>Partially edited. RNA editing at this position consists of an insertion of one guanine nucleotide. The sequence displayed here is the V protein, derived from the edited RNA. The unedited RNA gives rise to the P protein (AC Q06427).</text>
</comment>
<accession>Q06428</accession>
<dbReference type="EMBL" id="Z26249">
    <property type="status" value="NOT_ANNOTATED_CDS"/>
    <property type="molecule type" value="Genomic_RNA"/>
</dbReference>
<dbReference type="SMR" id="Q06428"/>
<dbReference type="GO" id="GO:0030430">
    <property type="term" value="C:host cell cytoplasm"/>
    <property type="evidence" value="ECO:0007669"/>
    <property type="project" value="UniProtKB-SubCell"/>
</dbReference>
<dbReference type="GO" id="GO:0042025">
    <property type="term" value="C:host cell nucleus"/>
    <property type="evidence" value="ECO:0007669"/>
    <property type="project" value="UniProtKB-SubCell"/>
</dbReference>
<dbReference type="GO" id="GO:0046872">
    <property type="term" value="F:metal ion binding"/>
    <property type="evidence" value="ECO:0007669"/>
    <property type="project" value="UniProtKB-KW"/>
</dbReference>
<dbReference type="GO" id="GO:0039554">
    <property type="term" value="P:symbiont-mediated suppression of host cytoplasmic pattern recognition receptor signaling pathway via inhibition of MDA-5 activity"/>
    <property type="evidence" value="ECO:0007669"/>
    <property type="project" value="UniProtKB-KW"/>
</dbReference>
<dbReference type="FunFam" id="4.10.80.340:FF:000001">
    <property type="entry name" value="Protein V"/>
    <property type="match status" value="1"/>
</dbReference>
<dbReference type="Gene3D" id="4.10.80.340">
    <property type="match status" value="1"/>
</dbReference>
<dbReference type="InterPro" id="IPR024279">
    <property type="entry name" value="Paramyx_V_Zn-bd"/>
</dbReference>
<dbReference type="InterPro" id="IPR025909">
    <property type="entry name" value="Soyouz_module"/>
</dbReference>
<dbReference type="Pfam" id="PF14313">
    <property type="entry name" value="Soyouz_module"/>
    <property type="match status" value="1"/>
</dbReference>
<dbReference type="Pfam" id="PF13008">
    <property type="entry name" value="zf-Paramyx-P"/>
    <property type="match status" value="1"/>
</dbReference>
<sequence>MATFTDAEIDELFETSGTVIDSIITAQGKPVETVGRSAIPRGKTKALSSAWEKHGSVQSPASQDTPDRQDRSDKQLSTPEQVTPHDSPPATSTDQPPTQAADEAGDTQLKTGASNSLLSMLDKLSNKSSNAKKGPMVKPPGRASSTSDSTAGESTKPRKQSRETAEPGQGRPWKPGHRREHSISWTMGGVTTISWCNPSCSPIRAEPRQYSCTCGSCPATCRLCASDDVYDGGDITEGK</sequence>
<evidence type="ECO:0000250" key="1"/>
<evidence type="ECO:0000250" key="2">
    <source>
        <dbReference type="UniProtKB" id="P0C765"/>
    </source>
</evidence>
<evidence type="ECO:0000256" key="3">
    <source>
        <dbReference type="SAM" id="MobiDB-lite"/>
    </source>
</evidence>
<evidence type="ECO:0000269" key="4">
    <source>
    </source>
</evidence>
<protein>
    <recommendedName>
        <fullName>Non-structural protein V</fullName>
    </recommendedName>
</protein>